<sequence>MVKGRHSKRKGNFHIILRNASLLQRQKLDKSRSTGSLLESRRQPCVLLSFAKLFLLCIVFSPKLDYTKKKTKILKLHQSFGTATILTIFHLHGSRSVAAQNFILFHDYLH</sequence>
<organism>
    <name type="scientific">Saccharomyces cerevisiae (strain ATCC 204508 / S288c)</name>
    <name type="common">Baker's yeast</name>
    <dbReference type="NCBI Taxonomy" id="559292"/>
    <lineage>
        <taxon>Eukaryota</taxon>
        <taxon>Fungi</taxon>
        <taxon>Dikarya</taxon>
        <taxon>Ascomycota</taxon>
        <taxon>Saccharomycotina</taxon>
        <taxon>Saccharomycetes</taxon>
        <taxon>Saccharomycetales</taxon>
        <taxon>Saccharomycetaceae</taxon>
        <taxon>Saccharomyces</taxon>
    </lineage>
</organism>
<name>YL365_YEAST</name>
<gene>
    <name type="ordered locus">YLR365W</name>
    <name type="ORF">L8039.8</name>
</gene>
<protein>
    <recommendedName>
        <fullName>Uncharacterized protein YLR365W</fullName>
    </recommendedName>
</protein>
<reference key="1">
    <citation type="journal article" date="1997" name="Nature">
        <title>The nucleotide sequence of Saccharomyces cerevisiae chromosome XII.</title>
        <authorList>
            <person name="Johnston M."/>
            <person name="Hillier L.W."/>
            <person name="Riles L."/>
            <person name="Albermann K."/>
            <person name="Andre B."/>
            <person name="Ansorge W."/>
            <person name="Benes V."/>
            <person name="Brueckner M."/>
            <person name="Delius H."/>
            <person name="Dubois E."/>
            <person name="Duesterhoeft A."/>
            <person name="Entian K.-D."/>
            <person name="Floeth M."/>
            <person name="Goffeau A."/>
            <person name="Hebling U."/>
            <person name="Heumann K."/>
            <person name="Heuss-Neitzel D."/>
            <person name="Hilbert H."/>
            <person name="Hilger F."/>
            <person name="Kleine K."/>
            <person name="Koetter P."/>
            <person name="Louis E.J."/>
            <person name="Messenguy F."/>
            <person name="Mewes H.-W."/>
            <person name="Miosga T."/>
            <person name="Moestl D."/>
            <person name="Mueller-Auer S."/>
            <person name="Nentwich U."/>
            <person name="Obermaier B."/>
            <person name="Piravandi E."/>
            <person name="Pohl T.M."/>
            <person name="Portetelle D."/>
            <person name="Purnelle B."/>
            <person name="Rechmann S."/>
            <person name="Rieger M."/>
            <person name="Rinke M."/>
            <person name="Rose M."/>
            <person name="Scharfe M."/>
            <person name="Scherens B."/>
            <person name="Scholler P."/>
            <person name="Schwager C."/>
            <person name="Schwarz S."/>
            <person name="Underwood A.P."/>
            <person name="Urrestarazu L.A."/>
            <person name="Vandenbol M."/>
            <person name="Verhasselt P."/>
            <person name="Vierendeels F."/>
            <person name="Voet M."/>
            <person name="Volckaert G."/>
            <person name="Voss H."/>
            <person name="Wambutt R."/>
            <person name="Wedler E."/>
            <person name="Wedler H."/>
            <person name="Zimmermann F.K."/>
            <person name="Zollner A."/>
            <person name="Hani J."/>
            <person name="Hoheisel J.D."/>
        </authorList>
    </citation>
    <scope>NUCLEOTIDE SEQUENCE [LARGE SCALE GENOMIC DNA]</scope>
    <source>
        <strain>ATCC 204508 / S288c</strain>
    </source>
</reference>
<reference key="2">
    <citation type="journal article" date="2014" name="G3 (Bethesda)">
        <title>The reference genome sequence of Saccharomyces cerevisiae: Then and now.</title>
        <authorList>
            <person name="Engel S.R."/>
            <person name="Dietrich F.S."/>
            <person name="Fisk D.G."/>
            <person name="Binkley G."/>
            <person name="Balakrishnan R."/>
            <person name="Costanzo M.C."/>
            <person name="Dwight S.S."/>
            <person name="Hitz B.C."/>
            <person name="Karra K."/>
            <person name="Nash R.S."/>
            <person name="Weng S."/>
            <person name="Wong E.D."/>
            <person name="Lloyd P."/>
            <person name="Skrzypek M.S."/>
            <person name="Miyasato S.R."/>
            <person name="Simison M."/>
            <person name="Cherry J.M."/>
        </authorList>
    </citation>
    <scope>GENOME REANNOTATION</scope>
    <source>
        <strain>ATCC 204508 / S288c</strain>
    </source>
</reference>
<reference key="3">
    <citation type="journal article" date="2007" name="Genome Res.">
        <title>Approaching a complete repository of sequence-verified protein-encoding clones for Saccharomyces cerevisiae.</title>
        <authorList>
            <person name="Hu Y."/>
            <person name="Rolfs A."/>
            <person name="Bhullar B."/>
            <person name="Murthy T.V.S."/>
            <person name="Zhu C."/>
            <person name="Berger M.F."/>
            <person name="Camargo A.A."/>
            <person name="Kelley F."/>
            <person name="McCarron S."/>
            <person name="Jepson D."/>
            <person name="Richardson A."/>
            <person name="Raphael J."/>
            <person name="Moreira D."/>
            <person name="Taycher E."/>
            <person name="Zuo D."/>
            <person name="Mohr S."/>
            <person name="Kane M.F."/>
            <person name="Williamson J."/>
            <person name="Simpson A.J.G."/>
            <person name="Bulyk M.L."/>
            <person name="Harlow E."/>
            <person name="Marsischky G."/>
            <person name="Kolodner R.D."/>
            <person name="LaBaer J."/>
        </authorList>
    </citation>
    <scope>NUCLEOTIDE SEQUENCE [GENOMIC DNA]</scope>
    <source>
        <strain>ATCC 204508 / S288c</strain>
    </source>
</reference>
<accession>Q7LIF2</accession>
<accession>A0A1S0T0A7</accession>
<dbReference type="EMBL" id="U19103">
    <property type="protein sequence ID" value="AAB67569.1"/>
    <property type="molecule type" value="Genomic_DNA"/>
</dbReference>
<dbReference type="EMBL" id="AY558224">
    <property type="protein sequence ID" value="AAS56550.1"/>
    <property type="molecule type" value="Genomic_DNA"/>
</dbReference>
<dbReference type="EMBL" id="BK006945">
    <property type="protein sequence ID" value="DAA80322.1"/>
    <property type="molecule type" value="Genomic_DNA"/>
</dbReference>
<dbReference type="PIR" id="S51383">
    <property type="entry name" value="S51383"/>
</dbReference>
<dbReference type="RefSeq" id="NP_001335802.1">
    <property type="nucleotide sequence ID" value="NM_001348862.1"/>
</dbReference>
<dbReference type="DIP" id="DIP-5595N"/>
<dbReference type="FunCoup" id="Q7LIF2">
    <property type="interactions" value="17"/>
</dbReference>
<dbReference type="STRING" id="4932.YLR365W"/>
<dbReference type="PaxDb" id="4932-YLR365W"/>
<dbReference type="EnsemblFungi" id="YLR365W_mRNA">
    <property type="protein sequence ID" value="YLR365W"/>
    <property type="gene ID" value="YLR365W"/>
</dbReference>
<dbReference type="GeneID" id="851080"/>
<dbReference type="AGR" id="SGD:S000004357"/>
<dbReference type="SGD" id="S000004357">
    <property type="gene designation" value="YLR365W"/>
</dbReference>
<dbReference type="HOGENOM" id="CLU_2173022_0_0_1"/>
<dbReference type="InParanoid" id="Q7LIF2"/>
<dbReference type="PRO" id="PR:Q7LIF2"/>
<dbReference type="Proteomes" id="UP000002311">
    <property type="component" value="Chromosome XII"/>
</dbReference>
<dbReference type="RNAct" id="Q7LIF2">
    <property type="molecule type" value="protein"/>
</dbReference>
<keyword id="KW-1185">Reference proteome</keyword>
<proteinExistence type="predicted"/>
<feature type="chain" id="PRO_0000299642" description="Uncharacterized protein YLR365W">
    <location>
        <begin position="1"/>
        <end position="110"/>
    </location>
</feature>